<keyword id="KW-0687">Ribonucleoprotein</keyword>
<keyword id="KW-0689">Ribosomal protein</keyword>
<keyword id="KW-0694">RNA-binding</keyword>
<keyword id="KW-0699">rRNA-binding</keyword>
<feature type="chain" id="PRO_1000166405" description="Small ribosomal subunit protein uS15">
    <location>
        <begin position="1"/>
        <end position="89"/>
    </location>
</feature>
<comment type="function">
    <text evidence="1">One of the primary rRNA binding proteins, it binds directly to 16S rRNA where it helps nucleate assembly of the platform of the 30S subunit by binding and bridging several RNA helices of the 16S rRNA.</text>
</comment>
<comment type="function">
    <text evidence="1">Forms an intersubunit bridge (bridge B4) with the 23S rRNA of the 50S subunit in the ribosome.</text>
</comment>
<comment type="subunit">
    <text evidence="1">Part of the 30S ribosomal subunit. Forms a bridge to the 50S subunit in the 70S ribosome, contacting the 23S rRNA.</text>
</comment>
<comment type="similarity">
    <text evidence="1">Belongs to the universal ribosomal protein uS15 family.</text>
</comment>
<reference key="1">
    <citation type="submission" date="2009-03" db="EMBL/GenBank/DDBJ databases">
        <title>Brucella melitensis ATCC 23457 whole genome shotgun sequencing project.</title>
        <authorList>
            <person name="Setubal J.C."/>
            <person name="Boyle S."/>
            <person name="Crasta O.R."/>
            <person name="Gillespie J.J."/>
            <person name="Kenyon R.W."/>
            <person name="Lu J."/>
            <person name="Mane S."/>
            <person name="Nagrani S."/>
            <person name="Shallom J.M."/>
            <person name="Shallom S."/>
            <person name="Shukla M."/>
            <person name="Snyder E.E."/>
            <person name="Sobral B.W."/>
            <person name="Wattam A.R."/>
            <person name="Will R."/>
            <person name="Williams K."/>
            <person name="Yoo H."/>
            <person name="Munk C."/>
            <person name="Tapia R."/>
            <person name="Han C."/>
            <person name="Detter J.C."/>
            <person name="Bruce D."/>
            <person name="Brettin T.S."/>
        </authorList>
    </citation>
    <scope>NUCLEOTIDE SEQUENCE [LARGE SCALE GENOMIC DNA]</scope>
    <source>
        <strain>ATCC 23457</strain>
    </source>
</reference>
<gene>
    <name evidence="1" type="primary">rpsO</name>
    <name type="ordered locus">BMEA_A2228</name>
</gene>
<evidence type="ECO:0000255" key="1">
    <source>
        <dbReference type="HAMAP-Rule" id="MF_01343"/>
    </source>
</evidence>
<evidence type="ECO:0000305" key="2"/>
<sequence>MSITAERKQALIKEYATKEGDTGSPEVQVAVLSERIANLTEHFKGHKNDNHSRRGLLKLVSQRRRLLDYVKGVDHARYQALITRLGLRR</sequence>
<dbReference type="EMBL" id="CP001488">
    <property type="protein sequence ID" value="ACO01872.1"/>
    <property type="molecule type" value="Genomic_DNA"/>
</dbReference>
<dbReference type="RefSeq" id="WP_002965230.1">
    <property type="nucleotide sequence ID" value="NC_012441.1"/>
</dbReference>
<dbReference type="SMR" id="C0RG50"/>
<dbReference type="GeneID" id="97534579"/>
<dbReference type="KEGG" id="bmi:BMEA_A2228"/>
<dbReference type="HOGENOM" id="CLU_148518_0_0_5"/>
<dbReference type="Proteomes" id="UP000001748">
    <property type="component" value="Chromosome I"/>
</dbReference>
<dbReference type="GO" id="GO:0022627">
    <property type="term" value="C:cytosolic small ribosomal subunit"/>
    <property type="evidence" value="ECO:0007669"/>
    <property type="project" value="TreeGrafter"/>
</dbReference>
<dbReference type="GO" id="GO:0019843">
    <property type="term" value="F:rRNA binding"/>
    <property type="evidence" value="ECO:0007669"/>
    <property type="project" value="UniProtKB-UniRule"/>
</dbReference>
<dbReference type="GO" id="GO:0003735">
    <property type="term" value="F:structural constituent of ribosome"/>
    <property type="evidence" value="ECO:0007669"/>
    <property type="project" value="InterPro"/>
</dbReference>
<dbReference type="GO" id="GO:0006412">
    <property type="term" value="P:translation"/>
    <property type="evidence" value="ECO:0007669"/>
    <property type="project" value="UniProtKB-UniRule"/>
</dbReference>
<dbReference type="CDD" id="cd00353">
    <property type="entry name" value="Ribosomal_S15p_S13e"/>
    <property type="match status" value="1"/>
</dbReference>
<dbReference type="FunFam" id="1.10.287.10:FF:000002">
    <property type="entry name" value="30S ribosomal protein S15"/>
    <property type="match status" value="1"/>
</dbReference>
<dbReference type="Gene3D" id="6.10.250.3130">
    <property type="match status" value="1"/>
</dbReference>
<dbReference type="Gene3D" id="1.10.287.10">
    <property type="entry name" value="S15/NS1, RNA-binding"/>
    <property type="match status" value="1"/>
</dbReference>
<dbReference type="HAMAP" id="MF_01343_B">
    <property type="entry name" value="Ribosomal_uS15_B"/>
    <property type="match status" value="1"/>
</dbReference>
<dbReference type="InterPro" id="IPR000589">
    <property type="entry name" value="Ribosomal_uS15"/>
</dbReference>
<dbReference type="InterPro" id="IPR005290">
    <property type="entry name" value="Ribosomal_uS15_bac-type"/>
</dbReference>
<dbReference type="InterPro" id="IPR009068">
    <property type="entry name" value="uS15_NS1_RNA-bd_sf"/>
</dbReference>
<dbReference type="NCBIfam" id="TIGR00952">
    <property type="entry name" value="S15_bact"/>
    <property type="match status" value="1"/>
</dbReference>
<dbReference type="PANTHER" id="PTHR23321">
    <property type="entry name" value="RIBOSOMAL PROTEIN S15, BACTERIAL AND ORGANELLAR"/>
    <property type="match status" value="1"/>
</dbReference>
<dbReference type="PANTHER" id="PTHR23321:SF26">
    <property type="entry name" value="SMALL RIBOSOMAL SUBUNIT PROTEIN US15M"/>
    <property type="match status" value="1"/>
</dbReference>
<dbReference type="Pfam" id="PF00312">
    <property type="entry name" value="Ribosomal_S15"/>
    <property type="match status" value="1"/>
</dbReference>
<dbReference type="SMART" id="SM01387">
    <property type="entry name" value="Ribosomal_S15"/>
    <property type="match status" value="1"/>
</dbReference>
<dbReference type="SUPFAM" id="SSF47060">
    <property type="entry name" value="S15/NS1 RNA-binding domain"/>
    <property type="match status" value="1"/>
</dbReference>
<dbReference type="PROSITE" id="PS00362">
    <property type="entry name" value="RIBOSOMAL_S15"/>
    <property type="match status" value="1"/>
</dbReference>
<proteinExistence type="inferred from homology"/>
<protein>
    <recommendedName>
        <fullName evidence="1">Small ribosomal subunit protein uS15</fullName>
    </recommendedName>
    <alternativeName>
        <fullName evidence="2">30S ribosomal protein S15</fullName>
    </alternativeName>
</protein>
<organism>
    <name type="scientific">Brucella melitensis biotype 2 (strain ATCC 23457)</name>
    <dbReference type="NCBI Taxonomy" id="546272"/>
    <lineage>
        <taxon>Bacteria</taxon>
        <taxon>Pseudomonadati</taxon>
        <taxon>Pseudomonadota</taxon>
        <taxon>Alphaproteobacteria</taxon>
        <taxon>Hyphomicrobiales</taxon>
        <taxon>Brucellaceae</taxon>
        <taxon>Brucella/Ochrobactrum group</taxon>
        <taxon>Brucella</taxon>
    </lineage>
</organism>
<name>RS15_BRUMB</name>
<accession>C0RG50</accession>